<accession>B8F8H3</accession>
<sequence length="440" mass="50882">MQQLFSQHIARIQQIVQHALELARLDGLWIYAGQAKYHFLDDQTSPFKINPHFNYIFPDPTVEQSWLFLDGKNKPKLYFYAPQDYWHCTPNPPTSAFFADEFEWQMLTDSQQIQQYIINPTHCAFIGEQTELAKSLGFEHINPQKVLNVLHFERSIKSEFEIECIYQAQLTALAGHHAAKEAFFASKSEFEINLAYLQATKQSDNNVPYGNIVAINQHSAILHYTKLDFTPPCERHSFLLDAGTSYLGYASDLTRTYAFEPQSEFAAMIAQMEQFKLDTIADMQVGMNYLSYHTQMHRWISQMLHQFEFVKLPADQIFEEGISRTFFPHGLGHQLGLQVHDVAGFQQNHRGTRKAPPEIYPSLRCTRDLAEGMVLTIEPGFYFIEMLLNQWKNHPLAPFFNWQKIDEFKRYGGIRTEDNIVMRATGAENLTAKAESISSR</sequence>
<gene>
    <name evidence="1" type="primary">pepQ</name>
    <name type="ordered locus">HAPS_2192</name>
</gene>
<organism>
    <name type="scientific">Glaesserella parasuis serovar 5 (strain SH0165)</name>
    <name type="common">Haemophilus parasuis</name>
    <dbReference type="NCBI Taxonomy" id="557723"/>
    <lineage>
        <taxon>Bacteria</taxon>
        <taxon>Pseudomonadati</taxon>
        <taxon>Pseudomonadota</taxon>
        <taxon>Gammaproteobacteria</taxon>
        <taxon>Pasteurellales</taxon>
        <taxon>Pasteurellaceae</taxon>
        <taxon>Glaesserella</taxon>
    </lineage>
</organism>
<evidence type="ECO:0000255" key="1">
    <source>
        <dbReference type="HAMAP-Rule" id="MF_01279"/>
    </source>
</evidence>
<reference key="1">
    <citation type="journal article" date="2009" name="J. Bacteriol.">
        <title>Complete genome sequence of Haemophilus parasuis SH0165.</title>
        <authorList>
            <person name="Yue M."/>
            <person name="Yang F."/>
            <person name="Yang J."/>
            <person name="Bei W."/>
            <person name="Cai X."/>
            <person name="Chen L."/>
            <person name="Dong J."/>
            <person name="Zhou R."/>
            <person name="Jin M."/>
            <person name="Jin Q."/>
            <person name="Chen H."/>
        </authorList>
    </citation>
    <scope>NUCLEOTIDE SEQUENCE [LARGE SCALE GENOMIC DNA]</scope>
    <source>
        <strain>SH0165</strain>
    </source>
</reference>
<comment type="function">
    <text evidence="1">Splits dipeptides with a prolyl residue in the C-terminal position.</text>
</comment>
<comment type="catalytic activity">
    <reaction evidence="1">
        <text>Xaa-L-Pro dipeptide + H2O = an L-alpha-amino acid + L-proline</text>
        <dbReference type="Rhea" id="RHEA:76407"/>
        <dbReference type="ChEBI" id="CHEBI:15377"/>
        <dbReference type="ChEBI" id="CHEBI:59869"/>
        <dbReference type="ChEBI" id="CHEBI:60039"/>
        <dbReference type="ChEBI" id="CHEBI:195196"/>
        <dbReference type="EC" id="3.4.13.9"/>
    </reaction>
</comment>
<comment type="cofactor">
    <cofactor evidence="1">
        <name>Mn(2+)</name>
        <dbReference type="ChEBI" id="CHEBI:29035"/>
    </cofactor>
    <text evidence="1">Binds 2 manganese ions per subunit.</text>
</comment>
<comment type="similarity">
    <text evidence="1">Belongs to the peptidase M24B family. Bacterial-type prolidase subfamily.</text>
</comment>
<feature type="chain" id="PRO_1000165228" description="Xaa-Pro dipeptidase">
    <location>
        <begin position="1"/>
        <end position="440"/>
    </location>
</feature>
<feature type="binding site" evidence="1">
    <location>
        <position position="241"/>
    </location>
    <ligand>
        <name>Mn(2+)</name>
        <dbReference type="ChEBI" id="CHEBI:29035"/>
        <label>2</label>
    </ligand>
</feature>
<feature type="binding site" evidence="1">
    <location>
        <position position="252"/>
    </location>
    <ligand>
        <name>Mn(2+)</name>
        <dbReference type="ChEBI" id="CHEBI:29035"/>
        <label>1</label>
    </ligand>
</feature>
<feature type="binding site" evidence="1">
    <location>
        <position position="252"/>
    </location>
    <ligand>
        <name>Mn(2+)</name>
        <dbReference type="ChEBI" id="CHEBI:29035"/>
        <label>2</label>
    </ligand>
</feature>
<feature type="binding site" evidence="1">
    <location>
        <position position="333"/>
    </location>
    <ligand>
        <name>Mn(2+)</name>
        <dbReference type="ChEBI" id="CHEBI:29035"/>
        <label>1</label>
    </ligand>
</feature>
<feature type="binding site" evidence="1">
    <location>
        <position position="378"/>
    </location>
    <ligand>
        <name>Mn(2+)</name>
        <dbReference type="ChEBI" id="CHEBI:29035"/>
        <label>1</label>
    </ligand>
</feature>
<feature type="binding site" evidence="1">
    <location>
        <position position="417"/>
    </location>
    <ligand>
        <name>Mn(2+)</name>
        <dbReference type="ChEBI" id="CHEBI:29035"/>
        <label>1</label>
    </ligand>
</feature>
<feature type="binding site" evidence="1">
    <location>
        <position position="417"/>
    </location>
    <ligand>
        <name>Mn(2+)</name>
        <dbReference type="ChEBI" id="CHEBI:29035"/>
        <label>2</label>
    </ligand>
</feature>
<proteinExistence type="inferred from homology"/>
<dbReference type="EC" id="3.4.13.9" evidence="1"/>
<dbReference type="EMBL" id="CP001321">
    <property type="protein sequence ID" value="ACL33625.1"/>
    <property type="molecule type" value="Genomic_DNA"/>
</dbReference>
<dbReference type="RefSeq" id="WP_015940110.1">
    <property type="nucleotide sequence ID" value="NC_011852.1"/>
</dbReference>
<dbReference type="SMR" id="B8F8H3"/>
<dbReference type="STRING" id="557723.HAPS_2192"/>
<dbReference type="MEROPS" id="M24.003"/>
<dbReference type="KEGG" id="hap:HAPS_2192"/>
<dbReference type="PATRIC" id="fig|557723.8.peg.2165"/>
<dbReference type="HOGENOM" id="CLU_050675_0_0_6"/>
<dbReference type="Proteomes" id="UP000006743">
    <property type="component" value="Chromosome"/>
</dbReference>
<dbReference type="GO" id="GO:0005829">
    <property type="term" value="C:cytosol"/>
    <property type="evidence" value="ECO:0007669"/>
    <property type="project" value="TreeGrafter"/>
</dbReference>
<dbReference type="GO" id="GO:0004177">
    <property type="term" value="F:aminopeptidase activity"/>
    <property type="evidence" value="ECO:0007669"/>
    <property type="project" value="TreeGrafter"/>
</dbReference>
<dbReference type="GO" id="GO:0046872">
    <property type="term" value="F:metal ion binding"/>
    <property type="evidence" value="ECO:0007669"/>
    <property type="project" value="UniProtKB-KW"/>
</dbReference>
<dbReference type="GO" id="GO:0008235">
    <property type="term" value="F:metalloexopeptidase activity"/>
    <property type="evidence" value="ECO:0007669"/>
    <property type="project" value="UniProtKB-UniRule"/>
</dbReference>
<dbReference type="GO" id="GO:0016795">
    <property type="term" value="F:phosphoric triester hydrolase activity"/>
    <property type="evidence" value="ECO:0007669"/>
    <property type="project" value="InterPro"/>
</dbReference>
<dbReference type="GO" id="GO:0102009">
    <property type="term" value="F:proline dipeptidase activity"/>
    <property type="evidence" value="ECO:0007669"/>
    <property type="project" value="UniProtKB-EC"/>
</dbReference>
<dbReference type="GO" id="GO:0006508">
    <property type="term" value="P:proteolysis"/>
    <property type="evidence" value="ECO:0007669"/>
    <property type="project" value="UniProtKB-KW"/>
</dbReference>
<dbReference type="Gene3D" id="3.90.230.10">
    <property type="entry name" value="Creatinase/methionine aminopeptidase superfamily"/>
    <property type="match status" value="1"/>
</dbReference>
<dbReference type="Gene3D" id="3.40.350.10">
    <property type="entry name" value="Creatinase/prolidase N-terminal domain"/>
    <property type="match status" value="1"/>
</dbReference>
<dbReference type="HAMAP" id="MF_01279">
    <property type="entry name" value="X_Pro_dipeptid"/>
    <property type="match status" value="1"/>
</dbReference>
<dbReference type="InterPro" id="IPR029149">
    <property type="entry name" value="Creatin/AminoP/Spt16_N"/>
</dbReference>
<dbReference type="InterPro" id="IPR036005">
    <property type="entry name" value="Creatinase/aminopeptidase-like"/>
</dbReference>
<dbReference type="InterPro" id="IPR048819">
    <property type="entry name" value="PepQ_N"/>
</dbReference>
<dbReference type="InterPro" id="IPR000994">
    <property type="entry name" value="Pept_M24"/>
</dbReference>
<dbReference type="InterPro" id="IPR001131">
    <property type="entry name" value="Peptidase_M24B_aminopep-P_CS"/>
</dbReference>
<dbReference type="InterPro" id="IPR052433">
    <property type="entry name" value="X-Pro_dipept-like"/>
</dbReference>
<dbReference type="InterPro" id="IPR022846">
    <property type="entry name" value="X_Pro_dipept"/>
</dbReference>
<dbReference type="NCBIfam" id="NF010133">
    <property type="entry name" value="PRK13607.1"/>
    <property type="match status" value="1"/>
</dbReference>
<dbReference type="PANTHER" id="PTHR43226">
    <property type="entry name" value="XAA-PRO AMINOPEPTIDASE 3"/>
    <property type="match status" value="1"/>
</dbReference>
<dbReference type="PANTHER" id="PTHR43226:SF8">
    <property type="entry name" value="XAA-PRO DIPEPTIDASE"/>
    <property type="match status" value="1"/>
</dbReference>
<dbReference type="Pfam" id="PF21216">
    <property type="entry name" value="PepQ_N"/>
    <property type="match status" value="1"/>
</dbReference>
<dbReference type="Pfam" id="PF00557">
    <property type="entry name" value="Peptidase_M24"/>
    <property type="match status" value="1"/>
</dbReference>
<dbReference type="SUPFAM" id="SSF55920">
    <property type="entry name" value="Creatinase/aminopeptidase"/>
    <property type="match status" value="1"/>
</dbReference>
<dbReference type="PROSITE" id="PS00491">
    <property type="entry name" value="PROLINE_PEPTIDASE"/>
    <property type="match status" value="1"/>
</dbReference>
<keyword id="KW-0224">Dipeptidase</keyword>
<keyword id="KW-0378">Hydrolase</keyword>
<keyword id="KW-0464">Manganese</keyword>
<keyword id="KW-0479">Metal-binding</keyword>
<keyword id="KW-0482">Metalloprotease</keyword>
<keyword id="KW-0645">Protease</keyword>
<keyword id="KW-1185">Reference proteome</keyword>
<protein>
    <recommendedName>
        <fullName evidence="1">Xaa-Pro dipeptidase</fullName>
        <shortName evidence="1">X-Pro dipeptidase</shortName>
        <ecNumber evidence="1">3.4.13.9</ecNumber>
    </recommendedName>
    <alternativeName>
        <fullName evidence="1">Imidodipeptidase</fullName>
    </alternativeName>
    <alternativeName>
        <fullName evidence="1">Proline dipeptidase</fullName>
        <shortName evidence="1">Prolidase</shortName>
    </alternativeName>
</protein>
<name>PEPQ_GLAP5</name>